<keyword id="KW-0997">Cell inner membrane</keyword>
<keyword id="KW-1003">Cell membrane</keyword>
<keyword id="KW-0445">Lipid transport</keyword>
<keyword id="KW-0472">Membrane</keyword>
<keyword id="KW-0812">Transmembrane</keyword>
<keyword id="KW-1133">Transmembrane helix</keyword>
<keyword id="KW-0813">Transport</keyword>
<gene>
    <name evidence="1" type="primary">lplT</name>
    <name type="ordered locus">YPTS_3163</name>
</gene>
<dbReference type="EMBL" id="CP001048">
    <property type="protein sequence ID" value="ACC90118.1"/>
    <property type="molecule type" value="Genomic_DNA"/>
</dbReference>
<dbReference type="RefSeq" id="WP_002209842.1">
    <property type="nucleotide sequence ID" value="NZ_CP009780.1"/>
</dbReference>
<dbReference type="SMR" id="B2JZ74"/>
<dbReference type="GeneID" id="96662409"/>
<dbReference type="KEGG" id="ypb:YPTS_3163"/>
<dbReference type="PATRIC" id="fig|502801.10.peg.2596"/>
<dbReference type="GO" id="GO:0005886">
    <property type="term" value="C:plasma membrane"/>
    <property type="evidence" value="ECO:0007669"/>
    <property type="project" value="UniProtKB-SubCell"/>
</dbReference>
<dbReference type="GO" id="GO:0051978">
    <property type="term" value="F:lysophospholipid:sodium symporter activity"/>
    <property type="evidence" value="ECO:0007669"/>
    <property type="project" value="InterPro"/>
</dbReference>
<dbReference type="CDD" id="cd06173">
    <property type="entry name" value="MFS_MefA_like"/>
    <property type="match status" value="1"/>
</dbReference>
<dbReference type="Gene3D" id="1.20.1250.20">
    <property type="entry name" value="MFS general substrate transporter like domains"/>
    <property type="match status" value="1"/>
</dbReference>
<dbReference type="HAMAP" id="MF_01585">
    <property type="entry name" value="MFS_LplT"/>
    <property type="match status" value="1"/>
</dbReference>
<dbReference type="InterPro" id="IPR023727">
    <property type="entry name" value="LysoPLipid__transptr_LplT"/>
</dbReference>
<dbReference type="InterPro" id="IPR011701">
    <property type="entry name" value="MFS"/>
</dbReference>
<dbReference type="InterPro" id="IPR036259">
    <property type="entry name" value="MFS_trans_sf"/>
</dbReference>
<dbReference type="NCBIfam" id="NF008397">
    <property type="entry name" value="PRK11195.1"/>
    <property type="match status" value="1"/>
</dbReference>
<dbReference type="PANTHER" id="PTHR43266">
    <property type="entry name" value="MACROLIDE-EFFLUX PROTEIN"/>
    <property type="match status" value="1"/>
</dbReference>
<dbReference type="PANTHER" id="PTHR43266:SF2">
    <property type="entry name" value="MAJOR FACILITATOR SUPERFAMILY (MFS) PROFILE DOMAIN-CONTAINING PROTEIN"/>
    <property type="match status" value="1"/>
</dbReference>
<dbReference type="Pfam" id="PF07690">
    <property type="entry name" value="MFS_1"/>
    <property type="match status" value="1"/>
</dbReference>
<dbReference type="SUPFAM" id="SSF103473">
    <property type="entry name" value="MFS general substrate transporter"/>
    <property type="match status" value="1"/>
</dbReference>
<name>LPLT_YERPB</name>
<evidence type="ECO:0000255" key="1">
    <source>
        <dbReference type="HAMAP-Rule" id="MF_01585"/>
    </source>
</evidence>
<organism>
    <name type="scientific">Yersinia pseudotuberculosis serotype IB (strain PB1/+)</name>
    <dbReference type="NCBI Taxonomy" id="502801"/>
    <lineage>
        <taxon>Bacteria</taxon>
        <taxon>Pseudomonadati</taxon>
        <taxon>Pseudomonadota</taxon>
        <taxon>Gammaproteobacteria</taxon>
        <taxon>Enterobacterales</taxon>
        <taxon>Yersiniaceae</taxon>
        <taxon>Yersinia</taxon>
    </lineage>
</organism>
<comment type="function">
    <text evidence="1">Catalyzes the facilitated diffusion of 2-acyl-glycero-3-phosphoethanolamine (2-acyl-GPE) into the cell.</text>
</comment>
<comment type="subcellular location">
    <subcellularLocation>
        <location evidence="1">Cell inner membrane</location>
        <topology evidence="1">Multi-pass membrane protein</topology>
    </subcellularLocation>
</comment>
<comment type="similarity">
    <text evidence="1">Belongs to the major facilitator superfamily. LplT (TC 2.A.1.42) family.</text>
</comment>
<reference key="1">
    <citation type="submission" date="2008-04" db="EMBL/GenBank/DDBJ databases">
        <title>Complete sequence of Yersinia pseudotuberculosis PB1/+.</title>
        <authorList>
            <person name="Copeland A."/>
            <person name="Lucas S."/>
            <person name="Lapidus A."/>
            <person name="Glavina del Rio T."/>
            <person name="Dalin E."/>
            <person name="Tice H."/>
            <person name="Bruce D."/>
            <person name="Goodwin L."/>
            <person name="Pitluck S."/>
            <person name="Munk A.C."/>
            <person name="Brettin T."/>
            <person name="Detter J.C."/>
            <person name="Han C."/>
            <person name="Tapia R."/>
            <person name="Schmutz J."/>
            <person name="Larimer F."/>
            <person name="Land M."/>
            <person name="Hauser L."/>
            <person name="Challacombe J.F."/>
            <person name="Green L."/>
            <person name="Lindler L.E."/>
            <person name="Nikolich M.P."/>
            <person name="Richardson P."/>
        </authorList>
    </citation>
    <scope>NUCLEOTIDE SEQUENCE [LARGE SCALE GENOMIC DNA]</scope>
    <source>
        <strain>PB1/+</strain>
    </source>
</reference>
<feature type="chain" id="PRO_1000201283" description="Lysophospholipid transporter LplT">
    <location>
        <begin position="1"/>
        <end position="406"/>
    </location>
</feature>
<feature type="transmembrane region" description="Helical" evidence="1">
    <location>
        <begin position="16"/>
        <end position="36"/>
    </location>
</feature>
<feature type="transmembrane region" description="Helical" evidence="1">
    <location>
        <begin position="53"/>
        <end position="73"/>
    </location>
</feature>
<feature type="transmembrane region" description="Helical" evidence="1">
    <location>
        <begin position="91"/>
        <end position="111"/>
    </location>
</feature>
<feature type="transmembrane region" description="Helical" evidence="1">
    <location>
        <begin position="139"/>
        <end position="159"/>
    </location>
</feature>
<feature type="transmembrane region" description="Helical" evidence="1">
    <location>
        <begin position="164"/>
        <end position="184"/>
    </location>
</feature>
<feature type="transmembrane region" description="Helical" evidence="1">
    <location>
        <begin position="227"/>
        <end position="247"/>
    </location>
</feature>
<feature type="transmembrane region" description="Helical" evidence="1">
    <location>
        <begin position="253"/>
        <end position="273"/>
    </location>
</feature>
<feature type="transmembrane region" description="Helical" evidence="1">
    <location>
        <begin position="285"/>
        <end position="305"/>
    </location>
</feature>
<feature type="transmembrane region" description="Helical" evidence="1">
    <location>
        <begin position="310"/>
        <end position="330"/>
    </location>
</feature>
<feature type="transmembrane region" description="Helical" evidence="1">
    <location>
        <begin position="349"/>
        <end position="369"/>
    </location>
</feature>
<feature type="transmembrane region" description="Helical" evidence="1">
    <location>
        <begin position="372"/>
        <end position="392"/>
    </location>
</feature>
<sequence length="406" mass="42841">MSQDVLADKPLLSRSMVAVLCAQFFSAFGDNALLFATLALIKQQLYPDWSQPILQMAFVATYIVLAPFVGQIADGFAKGRVMMVANGLKLAGALVICFGLNPFLGYSLVGVGAAAYSPAKYGILGEITSGEQLVKANGMMEASTIAAILLGSVAGGILADWHLMAALGVCALVYAIAVIANLFIPRLAAARSGASWRPRAMTGSFFTACRLLWQDSETRFSLAGTSLFWGAGVTLRFLLVLWVPVALGIADNATPTLLNAMVAIGIVVGAGAAARFVTLKTVKRCLPAGVLIGVMVTIFSLQNSMPMAYLLLIIIGILGGFFVVPLNALLQERGKHSVGAGNAIAVQNLGENTAMLFMLGLYSLVVKLGAPVVAVGVGFGVVFALAIALLWGWQWRQQRQKTRQPE</sequence>
<proteinExistence type="inferred from homology"/>
<protein>
    <recommendedName>
        <fullName evidence="1">Lysophospholipid transporter LplT</fullName>
    </recommendedName>
</protein>
<accession>B2JZ74</accession>